<proteinExistence type="inferred from homology"/>
<feature type="chain" id="PRO_1000164270" description="Chaperone protein DnaJ">
    <location>
        <begin position="1"/>
        <end position="388"/>
    </location>
</feature>
<feature type="domain" description="J" evidence="1">
    <location>
        <begin position="5"/>
        <end position="70"/>
    </location>
</feature>
<feature type="repeat" description="CXXCXGXG motif">
    <location>
        <begin position="154"/>
        <end position="161"/>
    </location>
</feature>
<feature type="repeat" description="CXXCXGXG motif">
    <location>
        <begin position="171"/>
        <end position="178"/>
    </location>
</feature>
<feature type="repeat" description="CXXCXGXG motif">
    <location>
        <begin position="193"/>
        <end position="200"/>
    </location>
</feature>
<feature type="repeat" description="CXXCXGXG motif">
    <location>
        <begin position="207"/>
        <end position="214"/>
    </location>
</feature>
<feature type="zinc finger region" description="CR-type" evidence="1">
    <location>
        <begin position="141"/>
        <end position="219"/>
    </location>
</feature>
<feature type="binding site" evidence="1">
    <location>
        <position position="154"/>
    </location>
    <ligand>
        <name>Zn(2+)</name>
        <dbReference type="ChEBI" id="CHEBI:29105"/>
        <label>1</label>
    </ligand>
</feature>
<feature type="binding site" evidence="1">
    <location>
        <position position="157"/>
    </location>
    <ligand>
        <name>Zn(2+)</name>
        <dbReference type="ChEBI" id="CHEBI:29105"/>
        <label>1</label>
    </ligand>
</feature>
<feature type="binding site" evidence="1">
    <location>
        <position position="171"/>
    </location>
    <ligand>
        <name>Zn(2+)</name>
        <dbReference type="ChEBI" id="CHEBI:29105"/>
        <label>2</label>
    </ligand>
</feature>
<feature type="binding site" evidence="1">
    <location>
        <position position="174"/>
    </location>
    <ligand>
        <name>Zn(2+)</name>
        <dbReference type="ChEBI" id="CHEBI:29105"/>
        <label>2</label>
    </ligand>
</feature>
<feature type="binding site" evidence="1">
    <location>
        <position position="193"/>
    </location>
    <ligand>
        <name>Zn(2+)</name>
        <dbReference type="ChEBI" id="CHEBI:29105"/>
        <label>2</label>
    </ligand>
</feature>
<feature type="binding site" evidence="1">
    <location>
        <position position="196"/>
    </location>
    <ligand>
        <name>Zn(2+)</name>
        <dbReference type="ChEBI" id="CHEBI:29105"/>
        <label>2</label>
    </ligand>
</feature>
<feature type="binding site" evidence="1">
    <location>
        <position position="207"/>
    </location>
    <ligand>
        <name>Zn(2+)</name>
        <dbReference type="ChEBI" id="CHEBI:29105"/>
        <label>1</label>
    </ligand>
</feature>
<feature type="binding site" evidence="1">
    <location>
        <position position="210"/>
    </location>
    <ligand>
        <name>Zn(2+)</name>
        <dbReference type="ChEBI" id="CHEBI:29105"/>
        <label>1</label>
    </ligand>
</feature>
<reference key="1">
    <citation type="submission" date="2009-01" db="EMBL/GenBank/DDBJ databases">
        <title>Complete sequence of chromosome of Methylobacterium nodulans ORS 2060.</title>
        <authorList>
            <consortium name="US DOE Joint Genome Institute"/>
            <person name="Lucas S."/>
            <person name="Copeland A."/>
            <person name="Lapidus A."/>
            <person name="Glavina del Rio T."/>
            <person name="Dalin E."/>
            <person name="Tice H."/>
            <person name="Bruce D."/>
            <person name="Goodwin L."/>
            <person name="Pitluck S."/>
            <person name="Sims D."/>
            <person name="Brettin T."/>
            <person name="Detter J.C."/>
            <person name="Han C."/>
            <person name="Larimer F."/>
            <person name="Land M."/>
            <person name="Hauser L."/>
            <person name="Kyrpides N."/>
            <person name="Ivanova N."/>
            <person name="Marx C.J."/>
            <person name="Richardson P."/>
        </authorList>
    </citation>
    <scope>NUCLEOTIDE SEQUENCE [LARGE SCALE GENOMIC DNA]</scope>
    <source>
        <strain>LMG 21967 / CNCM I-2342 / ORS 2060</strain>
    </source>
</reference>
<evidence type="ECO:0000255" key="1">
    <source>
        <dbReference type="HAMAP-Rule" id="MF_01152"/>
    </source>
</evidence>
<comment type="function">
    <text evidence="1">Participates actively in the response to hyperosmotic and heat shock by preventing the aggregation of stress-denatured proteins and by disaggregating proteins, also in an autonomous, DnaK-independent fashion. Unfolded proteins bind initially to DnaJ; upon interaction with the DnaJ-bound protein, DnaK hydrolyzes its bound ATP, resulting in the formation of a stable complex. GrpE releases ADP from DnaK; ATP binding to DnaK triggers the release of the substrate protein, thus completing the reaction cycle. Several rounds of ATP-dependent interactions between DnaJ, DnaK and GrpE are required for fully efficient folding. Also involved, together with DnaK and GrpE, in the DNA replication of plasmids through activation of initiation proteins.</text>
</comment>
<comment type="cofactor">
    <cofactor evidence="1">
        <name>Zn(2+)</name>
        <dbReference type="ChEBI" id="CHEBI:29105"/>
    </cofactor>
    <text evidence="1">Binds 2 Zn(2+) ions per monomer.</text>
</comment>
<comment type="subunit">
    <text evidence="1">Homodimer.</text>
</comment>
<comment type="subcellular location">
    <subcellularLocation>
        <location evidence="1">Cytoplasm</location>
    </subcellularLocation>
</comment>
<comment type="domain">
    <text evidence="1">The J domain is necessary and sufficient to stimulate DnaK ATPase activity. Zinc center 1 plays an important role in the autonomous, DnaK-independent chaperone activity of DnaJ. Zinc center 2 is essential for interaction with DnaK and for DnaJ activity.</text>
</comment>
<comment type="similarity">
    <text evidence="1">Belongs to the DnaJ family.</text>
</comment>
<gene>
    <name evidence="1" type="primary">dnaJ</name>
    <name type="ordered locus">Mnod_6930</name>
</gene>
<protein>
    <recommendedName>
        <fullName evidence="1">Chaperone protein DnaJ</fullName>
    </recommendedName>
</protein>
<dbReference type="EMBL" id="CP001349">
    <property type="protein sequence ID" value="ACL61675.1"/>
    <property type="molecule type" value="Genomic_DNA"/>
</dbReference>
<dbReference type="RefSeq" id="WP_015933239.1">
    <property type="nucleotide sequence ID" value="NC_011894.1"/>
</dbReference>
<dbReference type="SMR" id="B8IHL2"/>
<dbReference type="STRING" id="460265.Mnod_6930"/>
<dbReference type="KEGG" id="mno:Mnod_6930"/>
<dbReference type="eggNOG" id="COG0484">
    <property type="taxonomic scope" value="Bacteria"/>
</dbReference>
<dbReference type="HOGENOM" id="CLU_017633_0_7_5"/>
<dbReference type="OrthoDB" id="9779889at2"/>
<dbReference type="Proteomes" id="UP000008207">
    <property type="component" value="Chromosome"/>
</dbReference>
<dbReference type="GO" id="GO:0005737">
    <property type="term" value="C:cytoplasm"/>
    <property type="evidence" value="ECO:0007669"/>
    <property type="project" value="UniProtKB-SubCell"/>
</dbReference>
<dbReference type="GO" id="GO:0005524">
    <property type="term" value="F:ATP binding"/>
    <property type="evidence" value="ECO:0007669"/>
    <property type="project" value="InterPro"/>
</dbReference>
<dbReference type="GO" id="GO:0031072">
    <property type="term" value="F:heat shock protein binding"/>
    <property type="evidence" value="ECO:0007669"/>
    <property type="project" value="InterPro"/>
</dbReference>
<dbReference type="GO" id="GO:0051082">
    <property type="term" value="F:unfolded protein binding"/>
    <property type="evidence" value="ECO:0007669"/>
    <property type="project" value="UniProtKB-UniRule"/>
</dbReference>
<dbReference type="GO" id="GO:0008270">
    <property type="term" value="F:zinc ion binding"/>
    <property type="evidence" value="ECO:0007669"/>
    <property type="project" value="UniProtKB-UniRule"/>
</dbReference>
<dbReference type="GO" id="GO:0051085">
    <property type="term" value="P:chaperone cofactor-dependent protein refolding"/>
    <property type="evidence" value="ECO:0007669"/>
    <property type="project" value="TreeGrafter"/>
</dbReference>
<dbReference type="GO" id="GO:0006260">
    <property type="term" value="P:DNA replication"/>
    <property type="evidence" value="ECO:0007669"/>
    <property type="project" value="UniProtKB-KW"/>
</dbReference>
<dbReference type="GO" id="GO:0042026">
    <property type="term" value="P:protein refolding"/>
    <property type="evidence" value="ECO:0007669"/>
    <property type="project" value="TreeGrafter"/>
</dbReference>
<dbReference type="GO" id="GO:0009408">
    <property type="term" value="P:response to heat"/>
    <property type="evidence" value="ECO:0007669"/>
    <property type="project" value="InterPro"/>
</dbReference>
<dbReference type="CDD" id="cd06257">
    <property type="entry name" value="DnaJ"/>
    <property type="match status" value="1"/>
</dbReference>
<dbReference type="CDD" id="cd10747">
    <property type="entry name" value="DnaJ_C"/>
    <property type="match status" value="1"/>
</dbReference>
<dbReference type="CDD" id="cd10719">
    <property type="entry name" value="DnaJ_zf"/>
    <property type="match status" value="1"/>
</dbReference>
<dbReference type="FunFam" id="1.10.287.110:FF:000034">
    <property type="entry name" value="Chaperone protein DnaJ"/>
    <property type="match status" value="1"/>
</dbReference>
<dbReference type="FunFam" id="2.10.230.10:FF:000002">
    <property type="entry name" value="Molecular chaperone DnaJ"/>
    <property type="match status" value="1"/>
</dbReference>
<dbReference type="FunFam" id="2.60.260.20:FF:000004">
    <property type="entry name" value="Molecular chaperone DnaJ"/>
    <property type="match status" value="1"/>
</dbReference>
<dbReference type="Gene3D" id="1.10.287.110">
    <property type="entry name" value="DnaJ domain"/>
    <property type="match status" value="1"/>
</dbReference>
<dbReference type="Gene3D" id="2.10.230.10">
    <property type="entry name" value="Heat shock protein DnaJ, cysteine-rich domain"/>
    <property type="match status" value="1"/>
</dbReference>
<dbReference type="Gene3D" id="2.60.260.20">
    <property type="entry name" value="Urease metallochaperone UreE, N-terminal domain"/>
    <property type="match status" value="2"/>
</dbReference>
<dbReference type="HAMAP" id="MF_01152">
    <property type="entry name" value="DnaJ"/>
    <property type="match status" value="1"/>
</dbReference>
<dbReference type="InterPro" id="IPR012724">
    <property type="entry name" value="DnaJ"/>
</dbReference>
<dbReference type="InterPro" id="IPR002939">
    <property type="entry name" value="DnaJ_C"/>
</dbReference>
<dbReference type="InterPro" id="IPR001623">
    <property type="entry name" value="DnaJ_domain"/>
</dbReference>
<dbReference type="InterPro" id="IPR018253">
    <property type="entry name" value="DnaJ_domain_CS"/>
</dbReference>
<dbReference type="InterPro" id="IPR008971">
    <property type="entry name" value="HSP40/DnaJ_pept-bd"/>
</dbReference>
<dbReference type="InterPro" id="IPR001305">
    <property type="entry name" value="HSP_DnaJ_Cys-rich_dom"/>
</dbReference>
<dbReference type="InterPro" id="IPR036410">
    <property type="entry name" value="HSP_DnaJ_Cys-rich_dom_sf"/>
</dbReference>
<dbReference type="InterPro" id="IPR036869">
    <property type="entry name" value="J_dom_sf"/>
</dbReference>
<dbReference type="NCBIfam" id="TIGR02349">
    <property type="entry name" value="DnaJ_bact"/>
    <property type="match status" value="1"/>
</dbReference>
<dbReference type="NCBIfam" id="NF008035">
    <property type="entry name" value="PRK10767.1"/>
    <property type="match status" value="1"/>
</dbReference>
<dbReference type="PANTHER" id="PTHR43096:SF48">
    <property type="entry name" value="CHAPERONE PROTEIN DNAJ"/>
    <property type="match status" value="1"/>
</dbReference>
<dbReference type="PANTHER" id="PTHR43096">
    <property type="entry name" value="DNAJ HOMOLOG 1, MITOCHONDRIAL-RELATED"/>
    <property type="match status" value="1"/>
</dbReference>
<dbReference type="Pfam" id="PF00226">
    <property type="entry name" value="DnaJ"/>
    <property type="match status" value="1"/>
</dbReference>
<dbReference type="Pfam" id="PF01556">
    <property type="entry name" value="DnaJ_C"/>
    <property type="match status" value="1"/>
</dbReference>
<dbReference type="Pfam" id="PF00684">
    <property type="entry name" value="DnaJ_CXXCXGXG"/>
    <property type="match status" value="1"/>
</dbReference>
<dbReference type="PRINTS" id="PR00625">
    <property type="entry name" value="JDOMAIN"/>
</dbReference>
<dbReference type="SMART" id="SM00271">
    <property type="entry name" value="DnaJ"/>
    <property type="match status" value="1"/>
</dbReference>
<dbReference type="SUPFAM" id="SSF46565">
    <property type="entry name" value="Chaperone J-domain"/>
    <property type="match status" value="1"/>
</dbReference>
<dbReference type="SUPFAM" id="SSF57938">
    <property type="entry name" value="DnaJ/Hsp40 cysteine-rich domain"/>
    <property type="match status" value="1"/>
</dbReference>
<dbReference type="SUPFAM" id="SSF49493">
    <property type="entry name" value="HSP40/DnaJ peptide-binding domain"/>
    <property type="match status" value="2"/>
</dbReference>
<dbReference type="PROSITE" id="PS00636">
    <property type="entry name" value="DNAJ_1"/>
    <property type="match status" value="1"/>
</dbReference>
<dbReference type="PROSITE" id="PS50076">
    <property type="entry name" value="DNAJ_2"/>
    <property type="match status" value="1"/>
</dbReference>
<dbReference type="PROSITE" id="PS51188">
    <property type="entry name" value="ZF_CR"/>
    <property type="match status" value="1"/>
</dbReference>
<accession>B8IHL2</accession>
<keyword id="KW-0143">Chaperone</keyword>
<keyword id="KW-0963">Cytoplasm</keyword>
<keyword id="KW-0235">DNA replication</keyword>
<keyword id="KW-0479">Metal-binding</keyword>
<keyword id="KW-1185">Reference proteome</keyword>
<keyword id="KW-0677">Repeat</keyword>
<keyword id="KW-0346">Stress response</keyword>
<keyword id="KW-0862">Zinc</keyword>
<keyword id="KW-0863">Zinc-finger</keyword>
<sequence>MSKRDYYEVLGVARTAGEGELKSAFRKLAMAYHPDRNPGDKEAEIKFKEVNEAYQTLSDGQKRAAYDRFGHAAFSQGAGGPGGPGFGADFGDFMSDIFDTFFGDARAGGAAGARGGRAGGRERGADLRYNLEITLEEAFTGKTETIRLPTSVTCEVCAGSGAKAGSKPRTCPTCGGYGRVRAAQGFFAIERTCPNCHGRGEIIDDPCTACGGAGRVTRERTLSVNVPAGVDDGLRIRLAGEGESGLRGGPAGDLYIFLSIKPHPFFQRDGADLFCRVPISMVTAALSGEITVPVIDGSHTTVRIPAGTQTNKQFRLKGKGMPVLRSRDVGDLYIQVFVETPQNLTKRQRELLQEFDQHGSQADNHPESAGFFSRVKEFFDGLSGSGRA</sequence>
<name>DNAJ_METNO</name>
<organism>
    <name type="scientific">Methylobacterium nodulans (strain LMG 21967 / CNCM I-2342 / ORS 2060)</name>
    <dbReference type="NCBI Taxonomy" id="460265"/>
    <lineage>
        <taxon>Bacteria</taxon>
        <taxon>Pseudomonadati</taxon>
        <taxon>Pseudomonadota</taxon>
        <taxon>Alphaproteobacteria</taxon>
        <taxon>Hyphomicrobiales</taxon>
        <taxon>Methylobacteriaceae</taxon>
        <taxon>Methylobacterium</taxon>
    </lineage>
</organism>